<protein>
    <recommendedName>
        <fullName evidence="1">3-isopropylmalate dehydratase small subunit</fullName>
        <ecNumber evidence="1">4.2.1.33</ecNumber>
    </recommendedName>
    <alternativeName>
        <fullName evidence="1">Alpha-IPM isomerase</fullName>
        <shortName evidence="1">IPMI</shortName>
    </alternativeName>
    <alternativeName>
        <fullName evidence="1">Isopropylmalate isomerase</fullName>
    </alternativeName>
</protein>
<comment type="function">
    <text evidence="1">Catalyzes the isomerization between 2-isopropylmalate and 3-isopropylmalate, via the formation of 2-isopropylmaleate.</text>
</comment>
<comment type="catalytic activity">
    <reaction evidence="1">
        <text>(2R,3S)-3-isopropylmalate = (2S)-2-isopropylmalate</text>
        <dbReference type="Rhea" id="RHEA:32287"/>
        <dbReference type="ChEBI" id="CHEBI:1178"/>
        <dbReference type="ChEBI" id="CHEBI:35121"/>
        <dbReference type="EC" id="4.2.1.33"/>
    </reaction>
</comment>
<comment type="pathway">
    <text evidence="1">Amino-acid biosynthesis; L-leucine biosynthesis; L-leucine from 3-methyl-2-oxobutanoate: step 2/4.</text>
</comment>
<comment type="subunit">
    <text evidence="1">Heterodimer of LeuC and LeuD.</text>
</comment>
<comment type="similarity">
    <text evidence="1">Belongs to the LeuD family. LeuD type 1 subfamily.</text>
</comment>
<sequence>MQPFTTHTGLAVMIDSTNIDTDQIIPKQFLSKVTRDGFGVHLFHDWRYLDDAGDVPNPEFSLNQPRYKGASILVSQENFGCGSSREHAPWALADFGLRAIIAPSFADIFYGNSINNGLLPVALTHAQVRQLMDEVAAEEGAQITVDLTSCKVISPSGAEFSFTLAESARHKLLNGLDAIGLTLSHAAQISQYETQIQGWRS</sequence>
<keyword id="KW-0028">Amino-acid biosynthesis</keyword>
<keyword id="KW-0100">Branched-chain amino acid biosynthesis</keyword>
<keyword id="KW-0432">Leucine biosynthesis</keyword>
<keyword id="KW-0456">Lyase</keyword>
<reference key="1">
    <citation type="submission" date="2007-04" db="EMBL/GenBank/DDBJ databases">
        <title>Complete sequence of Shewanella putrefaciens CN-32.</title>
        <authorList>
            <consortium name="US DOE Joint Genome Institute"/>
            <person name="Copeland A."/>
            <person name="Lucas S."/>
            <person name="Lapidus A."/>
            <person name="Barry K."/>
            <person name="Detter J.C."/>
            <person name="Glavina del Rio T."/>
            <person name="Hammon N."/>
            <person name="Israni S."/>
            <person name="Dalin E."/>
            <person name="Tice H."/>
            <person name="Pitluck S."/>
            <person name="Chain P."/>
            <person name="Malfatti S."/>
            <person name="Shin M."/>
            <person name="Vergez L."/>
            <person name="Schmutz J."/>
            <person name="Larimer F."/>
            <person name="Land M."/>
            <person name="Hauser L."/>
            <person name="Kyrpides N."/>
            <person name="Mikhailova N."/>
            <person name="Romine M.F."/>
            <person name="Fredrickson J."/>
            <person name="Tiedje J."/>
            <person name="Richardson P."/>
        </authorList>
    </citation>
    <scope>NUCLEOTIDE SEQUENCE [LARGE SCALE GENOMIC DNA]</scope>
    <source>
        <strain>CN-32 / ATCC BAA-453</strain>
    </source>
</reference>
<organism>
    <name type="scientific">Shewanella putrefaciens (strain CN-32 / ATCC BAA-453)</name>
    <dbReference type="NCBI Taxonomy" id="319224"/>
    <lineage>
        <taxon>Bacteria</taxon>
        <taxon>Pseudomonadati</taxon>
        <taxon>Pseudomonadota</taxon>
        <taxon>Gammaproteobacteria</taxon>
        <taxon>Alteromonadales</taxon>
        <taxon>Shewanellaceae</taxon>
        <taxon>Shewanella</taxon>
    </lineage>
</organism>
<name>LEUD_SHEPC</name>
<feature type="chain" id="PRO_1000063836" description="3-isopropylmalate dehydratase small subunit">
    <location>
        <begin position="1"/>
        <end position="201"/>
    </location>
</feature>
<dbReference type="EC" id="4.2.1.33" evidence="1"/>
<dbReference type="EMBL" id="CP000681">
    <property type="protein sequence ID" value="ABP74206.1"/>
    <property type="molecule type" value="Genomic_DNA"/>
</dbReference>
<dbReference type="SMR" id="A4Y2M3"/>
<dbReference type="STRING" id="319224.Sputcn32_0474"/>
<dbReference type="KEGG" id="spc:Sputcn32_0474"/>
<dbReference type="eggNOG" id="COG0066">
    <property type="taxonomic scope" value="Bacteria"/>
</dbReference>
<dbReference type="HOGENOM" id="CLU_081378_0_3_6"/>
<dbReference type="UniPathway" id="UPA00048">
    <property type="reaction ID" value="UER00071"/>
</dbReference>
<dbReference type="GO" id="GO:0009316">
    <property type="term" value="C:3-isopropylmalate dehydratase complex"/>
    <property type="evidence" value="ECO:0007669"/>
    <property type="project" value="InterPro"/>
</dbReference>
<dbReference type="GO" id="GO:0003861">
    <property type="term" value="F:3-isopropylmalate dehydratase activity"/>
    <property type="evidence" value="ECO:0007669"/>
    <property type="project" value="UniProtKB-UniRule"/>
</dbReference>
<dbReference type="GO" id="GO:0009098">
    <property type="term" value="P:L-leucine biosynthetic process"/>
    <property type="evidence" value="ECO:0007669"/>
    <property type="project" value="UniProtKB-UniRule"/>
</dbReference>
<dbReference type="CDD" id="cd01577">
    <property type="entry name" value="IPMI_Swivel"/>
    <property type="match status" value="1"/>
</dbReference>
<dbReference type="FunFam" id="3.20.19.10:FF:000003">
    <property type="entry name" value="3-isopropylmalate dehydratase small subunit"/>
    <property type="match status" value="1"/>
</dbReference>
<dbReference type="Gene3D" id="3.20.19.10">
    <property type="entry name" value="Aconitase, domain 4"/>
    <property type="match status" value="1"/>
</dbReference>
<dbReference type="HAMAP" id="MF_01031">
    <property type="entry name" value="LeuD_type1"/>
    <property type="match status" value="1"/>
</dbReference>
<dbReference type="InterPro" id="IPR004431">
    <property type="entry name" value="3-IsopropMal_deHydase_ssu"/>
</dbReference>
<dbReference type="InterPro" id="IPR015928">
    <property type="entry name" value="Aconitase/3IPM_dehydase_swvl"/>
</dbReference>
<dbReference type="InterPro" id="IPR000573">
    <property type="entry name" value="AconitaseA/IPMdHydase_ssu_swvl"/>
</dbReference>
<dbReference type="InterPro" id="IPR033940">
    <property type="entry name" value="IPMI_Swivel"/>
</dbReference>
<dbReference type="InterPro" id="IPR050075">
    <property type="entry name" value="LeuD"/>
</dbReference>
<dbReference type="NCBIfam" id="TIGR00171">
    <property type="entry name" value="leuD"/>
    <property type="match status" value="1"/>
</dbReference>
<dbReference type="NCBIfam" id="NF002458">
    <property type="entry name" value="PRK01641.1"/>
    <property type="match status" value="1"/>
</dbReference>
<dbReference type="PANTHER" id="PTHR43345:SF5">
    <property type="entry name" value="3-ISOPROPYLMALATE DEHYDRATASE SMALL SUBUNIT"/>
    <property type="match status" value="1"/>
</dbReference>
<dbReference type="PANTHER" id="PTHR43345">
    <property type="entry name" value="3-ISOPROPYLMALATE DEHYDRATASE SMALL SUBUNIT 2-RELATED-RELATED"/>
    <property type="match status" value="1"/>
</dbReference>
<dbReference type="Pfam" id="PF00694">
    <property type="entry name" value="Aconitase_C"/>
    <property type="match status" value="1"/>
</dbReference>
<dbReference type="SUPFAM" id="SSF52016">
    <property type="entry name" value="LeuD/IlvD-like"/>
    <property type="match status" value="1"/>
</dbReference>
<accession>A4Y2M3</accession>
<gene>
    <name evidence="1" type="primary">leuD</name>
    <name type="ordered locus">Sputcn32_0474</name>
</gene>
<evidence type="ECO:0000255" key="1">
    <source>
        <dbReference type="HAMAP-Rule" id="MF_01031"/>
    </source>
</evidence>
<proteinExistence type="inferred from homology"/>